<proteinExistence type="inferred from homology"/>
<name>MUTL_RICRO</name>
<sequence length="610" mass="68858">MTIKFLSESTINRIAAGEVIERPASVVKELVENAVDASSTKIDIILERAGKNLIIISDDGIGMTDKELEIAVERHTTSKFDESDFLNINTFGFRGEALPSIAAISKMLITSKKRDADKAFQIKLIGGNEKQVTISVHNEGTKIEIRDLFFATPARLKFLRADKTELAATVGVVKKIALAHPKISFSLTHDGKNLLKLKGQNKDAETNLKQRIIDVIGDDFIKNAAYIDFKTPDFSICGYTSSPTYNRASSEDQFLFINNRPVKDKLLQIALRVAYQDYLARDRYPICAIFLQINPQLVDVNVHPAKAEVRFHDPDYVRNLLIEAIKNALTNKSHVTSTTIASDALELFKNPLVNKQSPVSKVINVNSKSADYRPTTHSILNTVPQNHVCQKLIDTLSHAKIEQEVENRIEHEQQIRKQYKLGAAKAQLHTTYIISQTEDSIVITDQHAAHKRLGYEKIKDYLKTEELIKQRLLIPEIVELPNEKKADCLYDHREKLYKLGLTLEKFGEKSIIVTEIPNILGDVNVQKLIQDLADHLSDFGKNIALTELIEHVTETYACHYSIRAGRKLSADEMNALLRQMENTLLSGQCNHGRPTYIELKLKDIERLFGR</sequence>
<comment type="function">
    <text evidence="1">This protein is involved in the repair of mismatches in DNA. It is required for dam-dependent methyl-directed DNA mismatch repair. May act as a 'molecular matchmaker', a protein that promotes the formation of a stable complex between two or more DNA-binding proteins in an ATP-dependent manner without itself being part of a final effector complex.</text>
</comment>
<comment type="similarity">
    <text evidence="1">Belongs to the DNA mismatch repair MutL/HexB family.</text>
</comment>
<keyword id="KW-0227">DNA damage</keyword>
<keyword id="KW-0234">DNA repair</keyword>
<protein>
    <recommendedName>
        <fullName evidence="1">DNA mismatch repair protein MutL</fullName>
    </recommendedName>
</protein>
<gene>
    <name evidence="1" type="primary">mutL</name>
    <name type="ordered locus">RrIowa_1592</name>
</gene>
<evidence type="ECO:0000255" key="1">
    <source>
        <dbReference type="HAMAP-Rule" id="MF_00149"/>
    </source>
</evidence>
<feature type="chain" id="PRO_1000076706" description="DNA mismatch repair protein MutL">
    <location>
        <begin position="1"/>
        <end position="610"/>
    </location>
</feature>
<dbReference type="EMBL" id="CP000766">
    <property type="protein sequence ID" value="ABY73307.1"/>
    <property type="molecule type" value="Genomic_DNA"/>
</dbReference>
<dbReference type="RefSeq" id="WP_012262652.1">
    <property type="nucleotide sequence ID" value="NC_010263.3"/>
</dbReference>
<dbReference type="SMR" id="B0BVP7"/>
<dbReference type="KEGG" id="rrj:RrIowa_1592"/>
<dbReference type="eggNOG" id="COG0323">
    <property type="taxonomic scope" value="Bacteria"/>
</dbReference>
<dbReference type="HOGENOM" id="CLU_004131_4_2_5"/>
<dbReference type="Proteomes" id="UP000000796">
    <property type="component" value="Chromosome"/>
</dbReference>
<dbReference type="GO" id="GO:0032300">
    <property type="term" value="C:mismatch repair complex"/>
    <property type="evidence" value="ECO:0007669"/>
    <property type="project" value="InterPro"/>
</dbReference>
<dbReference type="GO" id="GO:0005524">
    <property type="term" value="F:ATP binding"/>
    <property type="evidence" value="ECO:0007669"/>
    <property type="project" value="InterPro"/>
</dbReference>
<dbReference type="GO" id="GO:0016887">
    <property type="term" value="F:ATP hydrolysis activity"/>
    <property type="evidence" value="ECO:0007669"/>
    <property type="project" value="InterPro"/>
</dbReference>
<dbReference type="GO" id="GO:0140664">
    <property type="term" value="F:ATP-dependent DNA damage sensor activity"/>
    <property type="evidence" value="ECO:0007669"/>
    <property type="project" value="InterPro"/>
</dbReference>
<dbReference type="GO" id="GO:0030983">
    <property type="term" value="F:mismatched DNA binding"/>
    <property type="evidence" value="ECO:0007669"/>
    <property type="project" value="InterPro"/>
</dbReference>
<dbReference type="GO" id="GO:0006298">
    <property type="term" value="P:mismatch repair"/>
    <property type="evidence" value="ECO:0007669"/>
    <property type="project" value="UniProtKB-UniRule"/>
</dbReference>
<dbReference type="CDD" id="cd16926">
    <property type="entry name" value="HATPase_MutL-MLH-PMS-like"/>
    <property type="match status" value="1"/>
</dbReference>
<dbReference type="CDD" id="cd00782">
    <property type="entry name" value="MutL_Trans"/>
    <property type="match status" value="1"/>
</dbReference>
<dbReference type="FunFam" id="3.30.565.10:FF:000003">
    <property type="entry name" value="DNA mismatch repair endonuclease MutL"/>
    <property type="match status" value="1"/>
</dbReference>
<dbReference type="Gene3D" id="3.30.230.10">
    <property type="match status" value="1"/>
</dbReference>
<dbReference type="Gene3D" id="3.30.565.10">
    <property type="entry name" value="Histidine kinase-like ATPase, C-terminal domain"/>
    <property type="match status" value="1"/>
</dbReference>
<dbReference type="Gene3D" id="3.30.1540.20">
    <property type="entry name" value="MutL, C-terminal domain, dimerisation subdomain"/>
    <property type="match status" value="1"/>
</dbReference>
<dbReference type="Gene3D" id="3.30.1370.100">
    <property type="entry name" value="MutL, C-terminal domain, regulatory subdomain"/>
    <property type="match status" value="1"/>
</dbReference>
<dbReference type="HAMAP" id="MF_00149">
    <property type="entry name" value="DNA_mis_repair"/>
    <property type="match status" value="1"/>
</dbReference>
<dbReference type="InterPro" id="IPR014762">
    <property type="entry name" value="DNA_mismatch_repair_CS"/>
</dbReference>
<dbReference type="InterPro" id="IPR020667">
    <property type="entry name" value="DNA_mismatch_repair_MutL"/>
</dbReference>
<dbReference type="InterPro" id="IPR013507">
    <property type="entry name" value="DNA_mismatch_S5_2-like"/>
</dbReference>
<dbReference type="InterPro" id="IPR036890">
    <property type="entry name" value="HATPase_C_sf"/>
</dbReference>
<dbReference type="InterPro" id="IPR002099">
    <property type="entry name" value="MutL/Mlh/PMS"/>
</dbReference>
<dbReference type="InterPro" id="IPR038973">
    <property type="entry name" value="MutL/Mlh/Pms-like"/>
</dbReference>
<dbReference type="InterPro" id="IPR014790">
    <property type="entry name" value="MutL_C"/>
</dbReference>
<dbReference type="InterPro" id="IPR042120">
    <property type="entry name" value="MutL_C_dimsub"/>
</dbReference>
<dbReference type="InterPro" id="IPR042121">
    <property type="entry name" value="MutL_C_regsub"/>
</dbReference>
<dbReference type="InterPro" id="IPR037198">
    <property type="entry name" value="MutL_C_sf"/>
</dbReference>
<dbReference type="InterPro" id="IPR020568">
    <property type="entry name" value="Ribosomal_Su5_D2-typ_SF"/>
</dbReference>
<dbReference type="InterPro" id="IPR014721">
    <property type="entry name" value="Ribsml_uS5_D2-typ_fold_subgr"/>
</dbReference>
<dbReference type="NCBIfam" id="TIGR00585">
    <property type="entry name" value="mutl"/>
    <property type="match status" value="1"/>
</dbReference>
<dbReference type="NCBIfam" id="NF000952">
    <property type="entry name" value="PRK00095.2-2"/>
    <property type="match status" value="1"/>
</dbReference>
<dbReference type="NCBIfam" id="NF000953">
    <property type="entry name" value="PRK00095.2-4"/>
    <property type="match status" value="1"/>
</dbReference>
<dbReference type="PANTHER" id="PTHR10073">
    <property type="entry name" value="DNA MISMATCH REPAIR PROTEIN MLH, PMS, MUTL"/>
    <property type="match status" value="1"/>
</dbReference>
<dbReference type="PANTHER" id="PTHR10073:SF12">
    <property type="entry name" value="DNA MISMATCH REPAIR PROTEIN MLH1"/>
    <property type="match status" value="1"/>
</dbReference>
<dbReference type="Pfam" id="PF01119">
    <property type="entry name" value="DNA_mis_repair"/>
    <property type="match status" value="1"/>
</dbReference>
<dbReference type="Pfam" id="PF13589">
    <property type="entry name" value="HATPase_c_3"/>
    <property type="match status" value="1"/>
</dbReference>
<dbReference type="Pfam" id="PF08676">
    <property type="entry name" value="MutL_C"/>
    <property type="match status" value="1"/>
</dbReference>
<dbReference type="SMART" id="SM01340">
    <property type="entry name" value="DNA_mis_repair"/>
    <property type="match status" value="1"/>
</dbReference>
<dbReference type="SMART" id="SM00853">
    <property type="entry name" value="MutL_C"/>
    <property type="match status" value="1"/>
</dbReference>
<dbReference type="SUPFAM" id="SSF55874">
    <property type="entry name" value="ATPase domain of HSP90 chaperone/DNA topoisomerase II/histidine kinase"/>
    <property type="match status" value="1"/>
</dbReference>
<dbReference type="SUPFAM" id="SSF118116">
    <property type="entry name" value="DNA mismatch repair protein MutL"/>
    <property type="match status" value="1"/>
</dbReference>
<dbReference type="SUPFAM" id="SSF54211">
    <property type="entry name" value="Ribosomal protein S5 domain 2-like"/>
    <property type="match status" value="1"/>
</dbReference>
<dbReference type="PROSITE" id="PS00058">
    <property type="entry name" value="DNA_MISMATCH_REPAIR_1"/>
    <property type="match status" value="1"/>
</dbReference>
<accession>B0BVP7</accession>
<reference key="1">
    <citation type="journal article" date="2008" name="Infect. Immun.">
        <title>Genomic comparison of virulent Rickettsia rickettsii Sheila Smith and avirulent Rickettsia rickettsii Iowa.</title>
        <authorList>
            <person name="Ellison D.W."/>
            <person name="Clark T.R."/>
            <person name="Sturdevant D.E."/>
            <person name="Virtaneva K."/>
            <person name="Porcella S.F."/>
            <person name="Hackstadt T."/>
        </authorList>
    </citation>
    <scope>NUCLEOTIDE SEQUENCE [LARGE SCALE GENOMIC DNA]</scope>
    <source>
        <strain>Iowa</strain>
    </source>
</reference>
<organism>
    <name type="scientific">Rickettsia rickettsii (strain Iowa)</name>
    <dbReference type="NCBI Taxonomy" id="452659"/>
    <lineage>
        <taxon>Bacteria</taxon>
        <taxon>Pseudomonadati</taxon>
        <taxon>Pseudomonadota</taxon>
        <taxon>Alphaproteobacteria</taxon>
        <taxon>Rickettsiales</taxon>
        <taxon>Rickettsiaceae</taxon>
        <taxon>Rickettsieae</taxon>
        <taxon>Rickettsia</taxon>
        <taxon>spotted fever group</taxon>
    </lineage>
</organism>